<name>RL1_BEII9</name>
<keyword id="KW-1185">Reference proteome</keyword>
<keyword id="KW-0678">Repressor</keyword>
<keyword id="KW-0687">Ribonucleoprotein</keyword>
<keyword id="KW-0689">Ribosomal protein</keyword>
<keyword id="KW-0694">RNA-binding</keyword>
<keyword id="KW-0699">rRNA-binding</keyword>
<keyword id="KW-0810">Translation regulation</keyword>
<keyword id="KW-0820">tRNA-binding</keyword>
<sequence length="231" mass="24085">MTHVGKRVVKNREGIDRVKLYPVDEAVKLIKERANAKFDETVEIAMNLGVDPKHADQMVRGVVNLPNGTGRTLRVAVFARGAKADEALAAGADIVGAEDLVATVQGGTIAFDRCIATPDMMPLVGRLGKVLGPRGLMPNPKVGTVTMDVAGAVKASKGGAVEFRVEKAGIIQGSVGKASFETEKLLENIAAFVDAVAKAKPQGAKGTYIQRVALSSTMGPGVKIDPATVTA</sequence>
<evidence type="ECO:0000255" key="1">
    <source>
        <dbReference type="HAMAP-Rule" id="MF_01318"/>
    </source>
</evidence>
<evidence type="ECO:0000305" key="2"/>
<gene>
    <name evidence="1" type="primary">rplA</name>
    <name type="ordered locus">Bind_1344</name>
</gene>
<accession>B2IK52</accession>
<dbReference type="EMBL" id="CP001016">
    <property type="protein sequence ID" value="ACB94984.1"/>
    <property type="molecule type" value="Genomic_DNA"/>
</dbReference>
<dbReference type="RefSeq" id="WP_012384341.1">
    <property type="nucleotide sequence ID" value="NC_010581.1"/>
</dbReference>
<dbReference type="SMR" id="B2IK52"/>
<dbReference type="STRING" id="395963.Bind_1344"/>
<dbReference type="KEGG" id="bid:Bind_1344"/>
<dbReference type="eggNOG" id="COG0081">
    <property type="taxonomic scope" value="Bacteria"/>
</dbReference>
<dbReference type="HOGENOM" id="CLU_062853_0_0_5"/>
<dbReference type="OrthoDB" id="9803740at2"/>
<dbReference type="Proteomes" id="UP000001695">
    <property type="component" value="Chromosome"/>
</dbReference>
<dbReference type="GO" id="GO:0022625">
    <property type="term" value="C:cytosolic large ribosomal subunit"/>
    <property type="evidence" value="ECO:0007669"/>
    <property type="project" value="TreeGrafter"/>
</dbReference>
<dbReference type="GO" id="GO:0019843">
    <property type="term" value="F:rRNA binding"/>
    <property type="evidence" value="ECO:0007669"/>
    <property type="project" value="UniProtKB-UniRule"/>
</dbReference>
<dbReference type="GO" id="GO:0003735">
    <property type="term" value="F:structural constituent of ribosome"/>
    <property type="evidence" value="ECO:0007669"/>
    <property type="project" value="InterPro"/>
</dbReference>
<dbReference type="GO" id="GO:0000049">
    <property type="term" value="F:tRNA binding"/>
    <property type="evidence" value="ECO:0007669"/>
    <property type="project" value="UniProtKB-KW"/>
</dbReference>
<dbReference type="GO" id="GO:0006417">
    <property type="term" value="P:regulation of translation"/>
    <property type="evidence" value="ECO:0007669"/>
    <property type="project" value="UniProtKB-KW"/>
</dbReference>
<dbReference type="GO" id="GO:0006412">
    <property type="term" value="P:translation"/>
    <property type="evidence" value="ECO:0007669"/>
    <property type="project" value="UniProtKB-UniRule"/>
</dbReference>
<dbReference type="CDD" id="cd00403">
    <property type="entry name" value="Ribosomal_L1"/>
    <property type="match status" value="1"/>
</dbReference>
<dbReference type="FunFam" id="3.40.50.790:FF:000001">
    <property type="entry name" value="50S ribosomal protein L1"/>
    <property type="match status" value="1"/>
</dbReference>
<dbReference type="Gene3D" id="3.30.190.20">
    <property type="match status" value="1"/>
</dbReference>
<dbReference type="Gene3D" id="3.40.50.790">
    <property type="match status" value="1"/>
</dbReference>
<dbReference type="HAMAP" id="MF_01318_B">
    <property type="entry name" value="Ribosomal_uL1_B"/>
    <property type="match status" value="1"/>
</dbReference>
<dbReference type="InterPro" id="IPR005878">
    <property type="entry name" value="Ribosom_uL1_bac-type"/>
</dbReference>
<dbReference type="InterPro" id="IPR002143">
    <property type="entry name" value="Ribosomal_uL1"/>
</dbReference>
<dbReference type="InterPro" id="IPR023674">
    <property type="entry name" value="Ribosomal_uL1-like"/>
</dbReference>
<dbReference type="InterPro" id="IPR028364">
    <property type="entry name" value="Ribosomal_uL1/biogenesis"/>
</dbReference>
<dbReference type="InterPro" id="IPR016095">
    <property type="entry name" value="Ribosomal_uL1_3-a/b-sand"/>
</dbReference>
<dbReference type="InterPro" id="IPR023673">
    <property type="entry name" value="Ribosomal_uL1_CS"/>
</dbReference>
<dbReference type="NCBIfam" id="TIGR01169">
    <property type="entry name" value="rplA_bact"/>
    <property type="match status" value="1"/>
</dbReference>
<dbReference type="PANTHER" id="PTHR36427">
    <property type="entry name" value="54S RIBOSOMAL PROTEIN L1, MITOCHONDRIAL"/>
    <property type="match status" value="1"/>
</dbReference>
<dbReference type="PANTHER" id="PTHR36427:SF3">
    <property type="entry name" value="LARGE RIBOSOMAL SUBUNIT PROTEIN UL1M"/>
    <property type="match status" value="1"/>
</dbReference>
<dbReference type="Pfam" id="PF00687">
    <property type="entry name" value="Ribosomal_L1"/>
    <property type="match status" value="1"/>
</dbReference>
<dbReference type="PIRSF" id="PIRSF002155">
    <property type="entry name" value="Ribosomal_L1"/>
    <property type="match status" value="1"/>
</dbReference>
<dbReference type="SUPFAM" id="SSF56808">
    <property type="entry name" value="Ribosomal protein L1"/>
    <property type="match status" value="1"/>
</dbReference>
<dbReference type="PROSITE" id="PS01199">
    <property type="entry name" value="RIBOSOMAL_L1"/>
    <property type="match status" value="1"/>
</dbReference>
<organism>
    <name type="scientific">Beijerinckia indica subsp. indica (strain ATCC 9039 / DSM 1715 / NCIMB 8712)</name>
    <dbReference type="NCBI Taxonomy" id="395963"/>
    <lineage>
        <taxon>Bacteria</taxon>
        <taxon>Pseudomonadati</taxon>
        <taxon>Pseudomonadota</taxon>
        <taxon>Alphaproteobacteria</taxon>
        <taxon>Hyphomicrobiales</taxon>
        <taxon>Beijerinckiaceae</taxon>
        <taxon>Beijerinckia</taxon>
    </lineage>
</organism>
<comment type="function">
    <text evidence="1">Binds directly to 23S rRNA. The L1 stalk is quite mobile in the ribosome, and is involved in E site tRNA release.</text>
</comment>
<comment type="function">
    <text evidence="1">Protein L1 is also a translational repressor protein, it controls the translation of the L11 operon by binding to its mRNA.</text>
</comment>
<comment type="subunit">
    <text evidence="1">Part of the 50S ribosomal subunit.</text>
</comment>
<comment type="similarity">
    <text evidence="1">Belongs to the universal ribosomal protein uL1 family.</text>
</comment>
<feature type="chain" id="PRO_1000141362" description="Large ribosomal subunit protein uL1">
    <location>
        <begin position="1"/>
        <end position="231"/>
    </location>
</feature>
<reference key="1">
    <citation type="journal article" date="2010" name="J. Bacteriol.">
        <title>Complete genome sequence of Beijerinckia indica subsp. indica.</title>
        <authorList>
            <person name="Tamas I."/>
            <person name="Dedysh S.N."/>
            <person name="Liesack W."/>
            <person name="Stott M.B."/>
            <person name="Alam M."/>
            <person name="Murrell J.C."/>
            <person name="Dunfield P.F."/>
        </authorList>
    </citation>
    <scope>NUCLEOTIDE SEQUENCE [LARGE SCALE GENOMIC DNA]</scope>
    <source>
        <strain>ATCC 9039 / DSM 1715 / NCIMB 8712</strain>
    </source>
</reference>
<protein>
    <recommendedName>
        <fullName evidence="1">Large ribosomal subunit protein uL1</fullName>
    </recommendedName>
    <alternativeName>
        <fullName evidence="2">50S ribosomal protein L1</fullName>
    </alternativeName>
</protein>
<proteinExistence type="inferred from homology"/>